<accession>B7UH62</accession>
<protein>
    <recommendedName>
        <fullName evidence="1">Protein GrpE</fullName>
    </recommendedName>
    <alternativeName>
        <fullName evidence="1">HSP-70 cofactor</fullName>
    </alternativeName>
</protein>
<dbReference type="EMBL" id="FM180568">
    <property type="protein sequence ID" value="CAS10450.1"/>
    <property type="molecule type" value="Genomic_DNA"/>
</dbReference>
<dbReference type="RefSeq" id="WP_001296310.1">
    <property type="nucleotide sequence ID" value="NC_011601.1"/>
</dbReference>
<dbReference type="SMR" id="B7UH62"/>
<dbReference type="GeneID" id="93774463"/>
<dbReference type="KEGG" id="ecg:E2348C_2902"/>
<dbReference type="HOGENOM" id="CLU_057217_6_0_6"/>
<dbReference type="Proteomes" id="UP000008205">
    <property type="component" value="Chromosome"/>
</dbReference>
<dbReference type="GO" id="GO:0005829">
    <property type="term" value="C:cytosol"/>
    <property type="evidence" value="ECO:0007669"/>
    <property type="project" value="TreeGrafter"/>
</dbReference>
<dbReference type="GO" id="GO:0000774">
    <property type="term" value="F:adenyl-nucleotide exchange factor activity"/>
    <property type="evidence" value="ECO:0007669"/>
    <property type="project" value="InterPro"/>
</dbReference>
<dbReference type="GO" id="GO:0042803">
    <property type="term" value="F:protein homodimerization activity"/>
    <property type="evidence" value="ECO:0007669"/>
    <property type="project" value="InterPro"/>
</dbReference>
<dbReference type="GO" id="GO:0051087">
    <property type="term" value="F:protein-folding chaperone binding"/>
    <property type="evidence" value="ECO:0007669"/>
    <property type="project" value="InterPro"/>
</dbReference>
<dbReference type="GO" id="GO:0051082">
    <property type="term" value="F:unfolded protein binding"/>
    <property type="evidence" value="ECO:0007669"/>
    <property type="project" value="TreeGrafter"/>
</dbReference>
<dbReference type="GO" id="GO:0006457">
    <property type="term" value="P:protein folding"/>
    <property type="evidence" value="ECO:0007669"/>
    <property type="project" value="InterPro"/>
</dbReference>
<dbReference type="CDD" id="cd00446">
    <property type="entry name" value="GrpE"/>
    <property type="match status" value="1"/>
</dbReference>
<dbReference type="FunFam" id="2.30.22.10:FF:000001">
    <property type="entry name" value="Protein GrpE"/>
    <property type="match status" value="1"/>
</dbReference>
<dbReference type="FunFam" id="3.90.20.20:FF:000001">
    <property type="entry name" value="Protein GrpE"/>
    <property type="match status" value="1"/>
</dbReference>
<dbReference type="Gene3D" id="3.90.20.20">
    <property type="match status" value="1"/>
</dbReference>
<dbReference type="Gene3D" id="2.30.22.10">
    <property type="entry name" value="Head domain of nucleotide exchange factor GrpE"/>
    <property type="match status" value="1"/>
</dbReference>
<dbReference type="HAMAP" id="MF_01151">
    <property type="entry name" value="GrpE"/>
    <property type="match status" value="1"/>
</dbReference>
<dbReference type="InterPro" id="IPR000740">
    <property type="entry name" value="GrpE"/>
</dbReference>
<dbReference type="InterPro" id="IPR013805">
    <property type="entry name" value="GrpE_coiled_coil"/>
</dbReference>
<dbReference type="InterPro" id="IPR009012">
    <property type="entry name" value="GrpE_head"/>
</dbReference>
<dbReference type="NCBIfam" id="NF007655">
    <property type="entry name" value="PRK10325.1"/>
    <property type="match status" value="1"/>
</dbReference>
<dbReference type="NCBIfam" id="NF010738">
    <property type="entry name" value="PRK14140.1"/>
    <property type="match status" value="1"/>
</dbReference>
<dbReference type="NCBIfam" id="NF010748">
    <property type="entry name" value="PRK14150.1"/>
    <property type="match status" value="1"/>
</dbReference>
<dbReference type="PANTHER" id="PTHR21237">
    <property type="entry name" value="GRPE PROTEIN"/>
    <property type="match status" value="1"/>
</dbReference>
<dbReference type="PANTHER" id="PTHR21237:SF23">
    <property type="entry name" value="GRPE PROTEIN HOMOLOG, MITOCHONDRIAL"/>
    <property type="match status" value="1"/>
</dbReference>
<dbReference type="Pfam" id="PF01025">
    <property type="entry name" value="GrpE"/>
    <property type="match status" value="1"/>
</dbReference>
<dbReference type="PRINTS" id="PR00773">
    <property type="entry name" value="GRPEPROTEIN"/>
</dbReference>
<dbReference type="SUPFAM" id="SSF58014">
    <property type="entry name" value="Coiled-coil domain of nucleotide exchange factor GrpE"/>
    <property type="match status" value="1"/>
</dbReference>
<dbReference type="SUPFAM" id="SSF51064">
    <property type="entry name" value="Head domain of nucleotide exchange factor GrpE"/>
    <property type="match status" value="1"/>
</dbReference>
<dbReference type="PROSITE" id="PS01071">
    <property type="entry name" value="GRPE"/>
    <property type="match status" value="1"/>
</dbReference>
<name>GRPE_ECO27</name>
<comment type="function">
    <text evidence="1">Participates actively in the response to hyperosmotic and heat shock by preventing the aggregation of stress-denatured proteins, in association with DnaK and GrpE. It is the nucleotide exchange factor for DnaK and may function as a thermosensor. Unfolded proteins bind initially to DnaJ; upon interaction with the DnaJ-bound protein, DnaK hydrolyzes its bound ATP, resulting in the formation of a stable complex. GrpE releases ADP from DnaK; ATP binding to DnaK triggers the release of the substrate protein, thus completing the reaction cycle. Several rounds of ATP-dependent interactions between DnaJ, DnaK and GrpE are required for fully efficient folding.</text>
</comment>
<comment type="subunit">
    <text evidence="1">Homodimer.</text>
</comment>
<comment type="subcellular location">
    <subcellularLocation>
        <location evidence="1">Cytoplasm</location>
    </subcellularLocation>
</comment>
<comment type="similarity">
    <text evidence="1">Belongs to the GrpE family.</text>
</comment>
<gene>
    <name evidence="1" type="primary">grpE</name>
    <name type="ordered locus">E2348C_2902</name>
</gene>
<organism>
    <name type="scientific">Escherichia coli O127:H6 (strain E2348/69 / EPEC)</name>
    <dbReference type="NCBI Taxonomy" id="574521"/>
    <lineage>
        <taxon>Bacteria</taxon>
        <taxon>Pseudomonadati</taxon>
        <taxon>Pseudomonadota</taxon>
        <taxon>Gammaproteobacteria</taxon>
        <taxon>Enterobacterales</taxon>
        <taxon>Enterobacteriaceae</taxon>
        <taxon>Escherichia</taxon>
    </lineage>
</organism>
<keyword id="KW-0143">Chaperone</keyword>
<keyword id="KW-0963">Cytoplasm</keyword>
<keyword id="KW-1185">Reference proteome</keyword>
<keyword id="KW-0346">Stress response</keyword>
<feature type="chain" id="PRO_1000164189" description="Protein GrpE">
    <location>
        <begin position="1"/>
        <end position="197"/>
    </location>
</feature>
<feature type="region of interest" description="Disordered" evidence="2">
    <location>
        <begin position="1"/>
        <end position="39"/>
    </location>
</feature>
<reference key="1">
    <citation type="journal article" date="2009" name="J. Bacteriol.">
        <title>Complete genome sequence and comparative genome analysis of enteropathogenic Escherichia coli O127:H6 strain E2348/69.</title>
        <authorList>
            <person name="Iguchi A."/>
            <person name="Thomson N.R."/>
            <person name="Ogura Y."/>
            <person name="Saunders D."/>
            <person name="Ooka T."/>
            <person name="Henderson I.R."/>
            <person name="Harris D."/>
            <person name="Asadulghani M."/>
            <person name="Kurokawa K."/>
            <person name="Dean P."/>
            <person name="Kenny B."/>
            <person name="Quail M.A."/>
            <person name="Thurston S."/>
            <person name="Dougan G."/>
            <person name="Hayashi T."/>
            <person name="Parkhill J."/>
            <person name="Frankel G."/>
        </authorList>
    </citation>
    <scope>NUCLEOTIDE SEQUENCE [LARGE SCALE GENOMIC DNA]</scope>
    <source>
        <strain>E2348/69 / EPEC</strain>
    </source>
</reference>
<sequence length="197" mass="21812">MSSKEQKTPEGQAPEEIIMDQHEEIEAVEPEASAEQVDPRDEKIANLEAQLAEAQTRERDGILRVKAEMENLRRRTELDIEKAHKFALEKFINELLPVIDSLDRALEVADKANPDMSAMVEGIELTLKSMLDVVRKFGVEVIAETNVPLDPNVHQAIAMVESDDVAPGNVLGIMQKGYTLNGRTIRAAMVTVAKAKA</sequence>
<proteinExistence type="inferred from homology"/>
<evidence type="ECO:0000255" key="1">
    <source>
        <dbReference type="HAMAP-Rule" id="MF_01151"/>
    </source>
</evidence>
<evidence type="ECO:0000256" key="2">
    <source>
        <dbReference type="SAM" id="MobiDB-lite"/>
    </source>
</evidence>